<feature type="chain" id="PRO_1000086747" description="Large ribosomal subunit protein uL16">
    <location>
        <begin position="1"/>
        <end position="139"/>
    </location>
</feature>
<feature type="region of interest" description="Disordered" evidence="2">
    <location>
        <begin position="1"/>
        <end position="24"/>
    </location>
</feature>
<feature type="compositionally biased region" description="Basic residues" evidence="2">
    <location>
        <begin position="1"/>
        <end position="17"/>
    </location>
</feature>
<organism>
    <name type="scientific">Clavibacter sepedonicus</name>
    <name type="common">Clavibacter michiganensis subsp. sepedonicus</name>
    <dbReference type="NCBI Taxonomy" id="31964"/>
    <lineage>
        <taxon>Bacteria</taxon>
        <taxon>Bacillati</taxon>
        <taxon>Actinomycetota</taxon>
        <taxon>Actinomycetes</taxon>
        <taxon>Micrococcales</taxon>
        <taxon>Microbacteriaceae</taxon>
        <taxon>Clavibacter</taxon>
    </lineage>
</organism>
<protein>
    <recommendedName>
        <fullName evidence="1">Large ribosomal subunit protein uL16</fullName>
    </recommendedName>
    <alternativeName>
        <fullName evidence="3">50S ribosomal protein L16</fullName>
    </alternativeName>
</protein>
<comment type="function">
    <text evidence="1">Binds 23S rRNA and is also seen to make contacts with the A and possibly P site tRNAs.</text>
</comment>
<comment type="subunit">
    <text evidence="1">Part of the 50S ribosomal subunit.</text>
</comment>
<comment type="similarity">
    <text evidence="1">Belongs to the universal ribosomal protein uL16 family.</text>
</comment>
<keyword id="KW-0687">Ribonucleoprotein</keyword>
<keyword id="KW-0689">Ribosomal protein</keyword>
<keyword id="KW-0694">RNA-binding</keyword>
<keyword id="KW-0699">rRNA-binding</keyword>
<keyword id="KW-0820">tRNA-binding</keyword>
<accession>B0RB46</accession>
<evidence type="ECO:0000255" key="1">
    <source>
        <dbReference type="HAMAP-Rule" id="MF_01342"/>
    </source>
</evidence>
<evidence type="ECO:0000256" key="2">
    <source>
        <dbReference type="SAM" id="MobiDB-lite"/>
    </source>
</evidence>
<evidence type="ECO:0000305" key="3"/>
<proteinExistence type="inferred from homology"/>
<gene>
    <name evidence="1" type="primary">rplP</name>
    <name type="ordered locus">CMS0290</name>
</gene>
<name>RL16_CLASE</name>
<sequence length="139" mass="15443">MLIPRKVKHRKQHHPGRTGHATGGTVVSFGEYGIQALTPAYVTNRQIESARIAMTRHVKRGGNVYINIFPDRPLTKKPAETRMGSGKGSVEWWVANVKPGRVLFELSGVDEATAREALTRAIHKLPLKARIIKREEGDA</sequence>
<reference key="1">
    <citation type="journal article" date="2008" name="J. Bacteriol.">
        <title>Genome of the actinomycete plant pathogen Clavibacter michiganensis subsp. sepedonicus suggests recent niche adaptation.</title>
        <authorList>
            <person name="Bentley S.D."/>
            <person name="Corton C."/>
            <person name="Brown S.E."/>
            <person name="Barron A."/>
            <person name="Clark L."/>
            <person name="Doggett J."/>
            <person name="Harris B."/>
            <person name="Ormond D."/>
            <person name="Quail M.A."/>
            <person name="May G."/>
            <person name="Francis D."/>
            <person name="Knudson D."/>
            <person name="Parkhill J."/>
            <person name="Ishimaru C.A."/>
        </authorList>
    </citation>
    <scope>NUCLEOTIDE SEQUENCE [LARGE SCALE GENOMIC DNA]</scope>
    <source>
        <strain>ATCC 33113 / DSM 20744 / JCM 9667 / LMG 2889 / ICMP 2535 / C-1</strain>
    </source>
</reference>
<dbReference type="EMBL" id="AM849034">
    <property type="protein sequence ID" value="CAQ00411.1"/>
    <property type="molecule type" value="Genomic_DNA"/>
</dbReference>
<dbReference type="RefSeq" id="WP_012039299.1">
    <property type="nucleotide sequence ID" value="NZ_MZMN01000003.1"/>
</dbReference>
<dbReference type="SMR" id="B0RB46"/>
<dbReference type="STRING" id="31964.CMS0290"/>
<dbReference type="GeneID" id="92984322"/>
<dbReference type="KEGG" id="cms:CMS0290"/>
<dbReference type="eggNOG" id="COG0197">
    <property type="taxonomic scope" value="Bacteria"/>
</dbReference>
<dbReference type="HOGENOM" id="CLU_078858_2_1_11"/>
<dbReference type="OrthoDB" id="9802589at2"/>
<dbReference type="Proteomes" id="UP000001318">
    <property type="component" value="Chromosome"/>
</dbReference>
<dbReference type="GO" id="GO:0022625">
    <property type="term" value="C:cytosolic large ribosomal subunit"/>
    <property type="evidence" value="ECO:0007669"/>
    <property type="project" value="TreeGrafter"/>
</dbReference>
<dbReference type="GO" id="GO:0019843">
    <property type="term" value="F:rRNA binding"/>
    <property type="evidence" value="ECO:0007669"/>
    <property type="project" value="UniProtKB-UniRule"/>
</dbReference>
<dbReference type="GO" id="GO:0003735">
    <property type="term" value="F:structural constituent of ribosome"/>
    <property type="evidence" value="ECO:0007669"/>
    <property type="project" value="InterPro"/>
</dbReference>
<dbReference type="GO" id="GO:0000049">
    <property type="term" value="F:tRNA binding"/>
    <property type="evidence" value="ECO:0007669"/>
    <property type="project" value="UniProtKB-KW"/>
</dbReference>
<dbReference type="GO" id="GO:0006412">
    <property type="term" value="P:translation"/>
    <property type="evidence" value="ECO:0007669"/>
    <property type="project" value="UniProtKB-UniRule"/>
</dbReference>
<dbReference type="CDD" id="cd01433">
    <property type="entry name" value="Ribosomal_L16_L10e"/>
    <property type="match status" value="1"/>
</dbReference>
<dbReference type="FunFam" id="3.90.1170.10:FF:000001">
    <property type="entry name" value="50S ribosomal protein L16"/>
    <property type="match status" value="1"/>
</dbReference>
<dbReference type="Gene3D" id="3.90.1170.10">
    <property type="entry name" value="Ribosomal protein L10e/L16"/>
    <property type="match status" value="1"/>
</dbReference>
<dbReference type="HAMAP" id="MF_01342">
    <property type="entry name" value="Ribosomal_uL16"/>
    <property type="match status" value="1"/>
</dbReference>
<dbReference type="InterPro" id="IPR047873">
    <property type="entry name" value="Ribosomal_uL16"/>
</dbReference>
<dbReference type="InterPro" id="IPR000114">
    <property type="entry name" value="Ribosomal_uL16_bact-type"/>
</dbReference>
<dbReference type="InterPro" id="IPR020798">
    <property type="entry name" value="Ribosomal_uL16_CS"/>
</dbReference>
<dbReference type="InterPro" id="IPR016180">
    <property type="entry name" value="Ribosomal_uL16_dom"/>
</dbReference>
<dbReference type="InterPro" id="IPR036920">
    <property type="entry name" value="Ribosomal_uL16_sf"/>
</dbReference>
<dbReference type="NCBIfam" id="TIGR01164">
    <property type="entry name" value="rplP_bact"/>
    <property type="match status" value="1"/>
</dbReference>
<dbReference type="PANTHER" id="PTHR12220">
    <property type="entry name" value="50S/60S RIBOSOMAL PROTEIN L16"/>
    <property type="match status" value="1"/>
</dbReference>
<dbReference type="PANTHER" id="PTHR12220:SF13">
    <property type="entry name" value="LARGE RIBOSOMAL SUBUNIT PROTEIN UL16M"/>
    <property type="match status" value="1"/>
</dbReference>
<dbReference type="Pfam" id="PF00252">
    <property type="entry name" value="Ribosomal_L16"/>
    <property type="match status" value="1"/>
</dbReference>
<dbReference type="PRINTS" id="PR00060">
    <property type="entry name" value="RIBOSOMALL16"/>
</dbReference>
<dbReference type="SUPFAM" id="SSF54686">
    <property type="entry name" value="Ribosomal protein L16p/L10e"/>
    <property type="match status" value="1"/>
</dbReference>
<dbReference type="PROSITE" id="PS00701">
    <property type="entry name" value="RIBOSOMAL_L16_2"/>
    <property type="match status" value="1"/>
</dbReference>